<feature type="chain" id="PRO_0000164781" description="Gene 53 protein">
    <location>
        <begin position="1"/>
        <end position="234"/>
    </location>
</feature>
<accession>Q05269</accession>
<keyword id="KW-1185">Reference proteome</keyword>
<protein>
    <recommendedName>
        <fullName>Gene 53 protein</fullName>
    </recommendedName>
    <alternativeName>
        <fullName>Gp53</fullName>
    </alternativeName>
</protein>
<sequence>MTDDISKLFSRATRKALIGWETNLTAEEIIQELWVWYLESPYIQKTLESLHRGEAVHYVRNQVRNILSGAAKARDLFQERSHYSSENVKEALQGESTNRYLVDILPLAMKALDAQNGGYAEAIRSRYTDGISPKDKSGQNRLFRAHKSLTEHVNIIAITAGVEKDDKGKVIVKDGPGSKHAIFPDIRKSQGDGHSDPTANIAIMLIENPELRDGYLYEPPISEFLGGRCHAQHS</sequence>
<name>VG53_BPML5</name>
<proteinExistence type="predicted"/>
<reference key="1">
    <citation type="journal article" date="1993" name="Mol. Microbiol.">
        <title>DNA sequence, structure and gene expression of mycobacteriophage L5: a phage system for mycobacterial genetics.</title>
        <authorList>
            <person name="Hatfull G.F."/>
            <person name="Sarkis G.J."/>
        </authorList>
    </citation>
    <scope>NUCLEOTIDE SEQUENCE [LARGE SCALE GENOMIC DNA]</scope>
</reference>
<organism>
    <name type="scientific">Mycobacterium phage L5</name>
    <name type="common">Mycobacteriophage L5</name>
    <dbReference type="NCBI Taxonomy" id="31757"/>
    <lineage>
        <taxon>Viruses</taxon>
        <taxon>Duplodnaviria</taxon>
        <taxon>Heunggongvirae</taxon>
        <taxon>Uroviricota</taxon>
        <taxon>Caudoviricetes</taxon>
        <taxon>Fromanvirus</taxon>
    </lineage>
</organism>
<gene>
    <name type="primary">53</name>
</gene>
<organismHost>
    <name type="scientific">Mycobacterium</name>
    <dbReference type="NCBI Taxonomy" id="1763"/>
</organismHost>
<dbReference type="EMBL" id="Z18946">
    <property type="protein sequence ID" value="CAA79429.1"/>
    <property type="molecule type" value="Genomic_DNA"/>
</dbReference>
<dbReference type="PIR" id="S30998">
    <property type="entry name" value="S30998"/>
</dbReference>
<dbReference type="RefSeq" id="NP_039717.1">
    <property type="nucleotide sequence ID" value="NC_001335.1"/>
</dbReference>
<dbReference type="GeneID" id="2942943"/>
<dbReference type="KEGG" id="vg:2942943"/>
<dbReference type="OrthoDB" id="6368at10239"/>
<dbReference type="Proteomes" id="UP000002123">
    <property type="component" value="Genome"/>
</dbReference>